<protein>
    <recommendedName>
        <fullName evidence="1">Probable potassium transport system protein Kup 2</fullName>
    </recommendedName>
</protein>
<sequence length="632" mass="68166">MTASATSTEGQEAASTSGFWGLTLGSIGVVFGDIGTSPLYAFREAAHGAAHGEPVSRMIVLGVLSLILWSLFIVVTAKYVLLLLRADNNGEGGTLSLMALGQRALGRRSMFLMSLGVIGASMFIGDSMITPAISVLSAVEGLKLAAPALEHYVVPLTVFILVVLFAVQSKGTARVATAFGPVMVLWFASLAVMGIVHITDDPSVLAAINPYYAVQFLLSHGTIGLVTLGAVFLAVTGGEALYADLGHFGRKPIQSAWLFFVLPSLLINYFGQGALVLSDPAAIENSFYRMVPELLLLPLVVLATAATVIASQAVITGAYSLVSQAVQLGLLPRFEVRYTSESHAGQIYLPRVNRLLLIGVMLLVLLFRTSSNLASAYGIAVSTTMVADGIMGFVVIWKLWNLRAAVAAAIIVPFVIVDLSFFSANLLKLFEGAWVPLLFGAAMAVTIWTWRRGSAILVLKTRKIEVPLDDLIGSLEKRPPHIVKGTAVFLTSDPTSVPTALLHNLKHNKVLHEHNVILTIETAQTPRVDVSERVRMEKISEKFSKVRLRFGFMESPNVPRALAVARKLGWQFDIMSTSFFVSRRSLKPSSQSGMPSWQDHLFIALSRSANDATDYFQIPTGRVVEVGTQVTI</sequence>
<feature type="chain" id="PRO_0000296759" description="Probable potassium transport system protein Kup 2">
    <location>
        <begin position="1"/>
        <end position="632"/>
    </location>
</feature>
<feature type="transmembrane region" description="Helical" evidence="1">
    <location>
        <begin position="19"/>
        <end position="39"/>
    </location>
</feature>
<feature type="transmembrane region" description="Helical" evidence="1">
    <location>
        <begin position="58"/>
        <end position="78"/>
    </location>
</feature>
<feature type="transmembrane region" description="Helical" evidence="1">
    <location>
        <begin position="110"/>
        <end position="130"/>
    </location>
</feature>
<feature type="transmembrane region" description="Helical" evidence="1">
    <location>
        <begin position="147"/>
        <end position="167"/>
    </location>
</feature>
<feature type="transmembrane region" description="Helical" evidence="1">
    <location>
        <begin position="178"/>
        <end position="198"/>
    </location>
</feature>
<feature type="transmembrane region" description="Helical" evidence="1">
    <location>
        <begin position="216"/>
        <end position="236"/>
    </location>
</feature>
<feature type="transmembrane region" description="Helical" evidence="1">
    <location>
        <begin position="257"/>
        <end position="277"/>
    </location>
</feature>
<feature type="transmembrane region" description="Helical" evidence="1">
    <location>
        <begin position="290"/>
        <end position="310"/>
    </location>
</feature>
<feature type="transmembrane region" description="Helical" evidence="1">
    <location>
        <begin position="347"/>
        <end position="367"/>
    </location>
</feature>
<feature type="transmembrane region" description="Helical" evidence="1">
    <location>
        <begin position="377"/>
        <end position="397"/>
    </location>
</feature>
<feature type="transmembrane region" description="Helical" evidence="1">
    <location>
        <begin position="404"/>
        <end position="424"/>
    </location>
</feature>
<feature type="transmembrane region" description="Helical" evidence="1">
    <location>
        <begin position="429"/>
        <end position="449"/>
    </location>
</feature>
<reference key="1">
    <citation type="journal article" date="2007" name="Science">
        <title>Legumes symbioses: absence of nod genes in photosynthetic bradyrhizobia.</title>
        <authorList>
            <person name="Giraud E."/>
            <person name="Moulin L."/>
            <person name="Vallenet D."/>
            <person name="Barbe V."/>
            <person name="Cytryn E."/>
            <person name="Avarre J.-C."/>
            <person name="Jaubert M."/>
            <person name="Simon D."/>
            <person name="Cartieaux F."/>
            <person name="Prin Y."/>
            <person name="Bena G."/>
            <person name="Hannibal L."/>
            <person name="Fardoux J."/>
            <person name="Kojadinovic M."/>
            <person name="Vuillet L."/>
            <person name="Lajus A."/>
            <person name="Cruveiller S."/>
            <person name="Rouy Z."/>
            <person name="Mangenot S."/>
            <person name="Segurens B."/>
            <person name="Dossat C."/>
            <person name="Franck W.L."/>
            <person name="Chang W.-S."/>
            <person name="Saunders E."/>
            <person name="Bruce D."/>
            <person name="Richardson P."/>
            <person name="Normand P."/>
            <person name="Dreyfus B."/>
            <person name="Pignol D."/>
            <person name="Stacey G."/>
            <person name="Emerich D."/>
            <person name="Vermeglio A."/>
            <person name="Medigue C."/>
            <person name="Sadowsky M."/>
        </authorList>
    </citation>
    <scope>NUCLEOTIDE SEQUENCE [LARGE SCALE GENOMIC DNA]</scope>
    <source>
        <strain>BTAi1 / ATCC BAA-1182</strain>
    </source>
</reference>
<evidence type="ECO:0000255" key="1">
    <source>
        <dbReference type="HAMAP-Rule" id="MF_01522"/>
    </source>
</evidence>
<comment type="function">
    <text evidence="1">Transport of potassium into the cell. Likely operates as a K(+):H(+) symporter.</text>
</comment>
<comment type="catalytic activity">
    <reaction evidence="1">
        <text>K(+)(in) + H(+)(in) = K(+)(out) + H(+)(out)</text>
        <dbReference type="Rhea" id="RHEA:28490"/>
        <dbReference type="ChEBI" id="CHEBI:15378"/>
        <dbReference type="ChEBI" id="CHEBI:29103"/>
    </reaction>
    <physiologicalReaction direction="right-to-left" evidence="1">
        <dbReference type="Rhea" id="RHEA:28492"/>
    </physiologicalReaction>
</comment>
<comment type="subcellular location">
    <subcellularLocation>
        <location evidence="1">Cell inner membrane</location>
        <topology evidence="1">Multi-pass membrane protein</topology>
    </subcellularLocation>
</comment>
<comment type="similarity">
    <text evidence="1">Belongs to the HAK/KUP transporter (TC 2.A.72) family.</text>
</comment>
<name>KUP2_BRASB</name>
<keyword id="KW-0997">Cell inner membrane</keyword>
<keyword id="KW-1003">Cell membrane</keyword>
<keyword id="KW-0406">Ion transport</keyword>
<keyword id="KW-0472">Membrane</keyword>
<keyword id="KW-0630">Potassium</keyword>
<keyword id="KW-0633">Potassium transport</keyword>
<keyword id="KW-1185">Reference proteome</keyword>
<keyword id="KW-0769">Symport</keyword>
<keyword id="KW-0812">Transmembrane</keyword>
<keyword id="KW-1133">Transmembrane helix</keyword>
<keyword id="KW-0813">Transport</keyword>
<proteinExistence type="inferred from homology"/>
<gene>
    <name evidence="1" type="primary">kup2</name>
    <name type="ordered locus">BBta_3512</name>
</gene>
<dbReference type="EMBL" id="CP000494">
    <property type="protein sequence ID" value="ABQ35605.1"/>
    <property type="molecule type" value="Genomic_DNA"/>
</dbReference>
<dbReference type="RefSeq" id="WP_012043616.1">
    <property type="nucleotide sequence ID" value="NC_009485.1"/>
</dbReference>
<dbReference type="SMR" id="A5EHG1"/>
<dbReference type="STRING" id="288000.BBta_3512"/>
<dbReference type="KEGG" id="bbt:BBta_3512"/>
<dbReference type="eggNOG" id="COG3158">
    <property type="taxonomic scope" value="Bacteria"/>
</dbReference>
<dbReference type="HOGENOM" id="CLU_008142_4_2_5"/>
<dbReference type="OrthoDB" id="9805577at2"/>
<dbReference type="Proteomes" id="UP000000246">
    <property type="component" value="Chromosome"/>
</dbReference>
<dbReference type="GO" id="GO:0005886">
    <property type="term" value="C:plasma membrane"/>
    <property type="evidence" value="ECO:0007669"/>
    <property type="project" value="UniProtKB-SubCell"/>
</dbReference>
<dbReference type="GO" id="GO:0015079">
    <property type="term" value="F:potassium ion transmembrane transporter activity"/>
    <property type="evidence" value="ECO:0007669"/>
    <property type="project" value="UniProtKB-UniRule"/>
</dbReference>
<dbReference type="GO" id="GO:0015293">
    <property type="term" value="F:symporter activity"/>
    <property type="evidence" value="ECO:0007669"/>
    <property type="project" value="UniProtKB-UniRule"/>
</dbReference>
<dbReference type="HAMAP" id="MF_01522">
    <property type="entry name" value="Kup"/>
    <property type="match status" value="1"/>
</dbReference>
<dbReference type="InterPro" id="IPR003855">
    <property type="entry name" value="K+_transporter"/>
</dbReference>
<dbReference type="InterPro" id="IPR053952">
    <property type="entry name" value="K_trans_C"/>
</dbReference>
<dbReference type="InterPro" id="IPR053951">
    <property type="entry name" value="K_trans_N"/>
</dbReference>
<dbReference type="InterPro" id="IPR023051">
    <property type="entry name" value="Kup"/>
</dbReference>
<dbReference type="PANTHER" id="PTHR30540:SF79">
    <property type="entry name" value="LOW AFFINITY POTASSIUM TRANSPORT SYSTEM PROTEIN KUP"/>
    <property type="match status" value="1"/>
</dbReference>
<dbReference type="PANTHER" id="PTHR30540">
    <property type="entry name" value="OSMOTIC STRESS POTASSIUM TRANSPORTER"/>
    <property type="match status" value="1"/>
</dbReference>
<dbReference type="Pfam" id="PF02705">
    <property type="entry name" value="K_trans"/>
    <property type="match status" value="1"/>
</dbReference>
<dbReference type="Pfam" id="PF22776">
    <property type="entry name" value="K_trans_C"/>
    <property type="match status" value="1"/>
</dbReference>
<accession>A5EHG1</accession>
<organism>
    <name type="scientific">Bradyrhizobium sp. (strain BTAi1 / ATCC BAA-1182)</name>
    <dbReference type="NCBI Taxonomy" id="288000"/>
    <lineage>
        <taxon>Bacteria</taxon>
        <taxon>Pseudomonadati</taxon>
        <taxon>Pseudomonadota</taxon>
        <taxon>Alphaproteobacteria</taxon>
        <taxon>Hyphomicrobiales</taxon>
        <taxon>Nitrobacteraceae</taxon>
        <taxon>Bradyrhizobium</taxon>
    </lineage>
</organism>